<protein>
    <recommendedName>
        <fullName evidence="1">High frequency lysogenization protein HflD</fullName>
    </recommendedName>
</protein>
<accession>B7LSM7</accession>
<comment type="function">
    <text evidence="1">Negative regulator of phage lambda lysogenization. Contributes to the degradation of the phage regulatory protein CII. Acts probably by holding CII on the membrane surface, away from the target promoters, but close to the FtsH protease.</text>
</comment>
<comment type="subunit">
    <text evidence="1">Interacts with CII protein from phage lambda.</text>
</comment>
<comment type="subcellular location">
    <subcellularLocation>
        <location>Cytoplasm</location>
    </subcellularLocation>
    <subcellularLocation>
        <location evidence="1">Cell inner membrane</location>
        <topology evidence="1">Peripheral membrane protein</topology>
        <orientation evidence="1">Cytoplasmic side</orientation>
    </subcellularLocation>
</comment>
<comment type="similarity">
    <text evidence="1">Belongs to the HflD family.</text>
</comment>
<keyword id="KW-0997">Cell inner membrane</keyword>
<keyword id="KW-1003">Cell membrane</keyword>
<keyword id="KW-0175">Coiled coil</keyword>
<keyword id="KW-0963">Cytoplasm</keyword>
<keyword id="KW-0472">Membrane</keyword>
<dbReference type="EMBL" id="CU928158">
    <property type="protein sequence ID" value="CAQ89313.1"/>
    <property type="molecule type" value="Genomic_DNA"/>
</dbReference>
<dbReference type="RefSeq" id="WP_001297479.1">
    <property type="nucleotide sequence ID" value="NC_011740.1"/>
</dbReference>
<dbReference type="SMR" id="B7LSM7"/>
<dbReference type="GeneID" id="93776278"/>
<dbReference type="KEGG" id="efe:EFER_1798"/>
<dbReference type="HOGENOM" id="CLU_098920_0_0_6"/>
<dbReference type="OrthoDB" id="9788031at2"/>
<dbReference type="Proteomes" id="UP000000745">
    <property type="component" value="Chromosome"/>
</dbReference>
<dbReference type="GO" id="GO:0005737">
    <property type="term" value="C:cytoplasm"/>
    <property type="evidence" value="ECO:0007669"/>
    <property type="project" value="UniProtKB-SubCell"/>
</dbReference>
<dbReference type="GO" id="GO:0005886">
    <property type="term" value="C:plasma membrane"/>
    <property type="evidence" value="ECO:0007669"/>
    <property type="project" value="UniProtKB-SubCell"/>
</dbReference>
<dbReference type="FunFam" id="1.10.3890.10:FF:000001">
    <property type="entry name" value="High frequency lysogenization protein HflD homolog"/>
    <property type="match status" value="1"/>
</dbReference>
<dbReference type="Gene3D" id="1.10.3890.10">
    <property type="entry name" value="HflD-like"/>
    <property type="match status" value="1"/>
</dbReference>
<dbReference type="HAMAP" id="MF_00695">
    <property type="entry name" value="HflD_protein"/>
    <property type="match status" value="1"/>
</dbReference>
<dbReference type="InterPro" id="IPR007451">
    <property type="entry name" value="HflD"/>
</dbReference>
<dbReference type="InterPro" id="IPR035932">
    <property type="entry name" value="HflD-like_sf"/>
</dbReference>
<dbReference type="NCBIfam" id="NF001245">
    <property type="entry name" value="PRK00218.1-1"/>
    <property type="match status" value="1"/>
</dbReference>
<dbReference type="NCBIfam" id="NF001246">
    <property type="entry name" value="PRK00218.1-2"/>
    <property type="match status" value="1"/>
</dbReference>
<dbReference type="NCBIfam" id="NF001248">
    <property type="entry name" value="PRK00218.1-4"/>
    <property type="match status" value="1"/>
</dbReference>
<dbReference type="NCBIfam" id="NF001249">
    <property type="entry name" value="PRK00218.1-5"/>
    <property type="match status" value="1"/>
</dbReference>
<dbReference type="PANTHER" id="PTHR38100">
    <property type="entry name" value="HIGH FREQUENCY LYSOGENIZATION PROTEIN HFLD"/>
    <property type="match status" value="1"/>
</dbReference>
<dbReference type="PANTHER" id="PTHR38100:SF1">
    <property type="entry name" value="HIGH FREQUENCY LYSOGENIZATION PROTEIN HFLD"/>
    <property type="match status" value="1"/>
</dbReference>
<dbReference type="Pfam" id="PF04356">
    <property type="entry name" value="DUF489"/>
    <property type="match status" value="1"/>
</dbReference>
<dbReference type="SUPFAM" id="SSF101322">
    <property type="entry name" value="YcfC-like"/>
    <property type="match status" value="1"/>
</dbReference>
<evidence type="ECO:0000255" key="1">
    <source>
        <dbReference type="HAMAP-Rule" id="MF_00695"/>
    </source>
</evidence>
<name>HFLD_ESCF3</name>
<gene>
    <name evidence="1" type="primary">hflD</name>
    <name type="ordered locus">EFER_1798</name>
</gene>
<reference key="1">
    <citation type="journal article" date="2009" name="PLoS Genet.">
        <title>Organised genome dynamics in the Escherichia coli species results in highly diverse adaptive paths.</title>
        <authorList>
            <person name="Touchon M."/>
            <person name="Hoede C."/>
            <person name="Tenaillon O."/>
            <person name="Barbe V."/>
            <person name="Baeriswyl S."/>
            <person name="Bidet P."/>
            <person name="Bingen E."/>
            <person name="Bonacorsi S."/>
            <person name="Bouchier C."/>
            <person name="Bouvet O."/>
            <person name="Calteau A."/>
            <person name="Chiapello H."/>
            <person name="Clermont O."/>
            <person name="Cruveiller S."/>
            <person name="Danchin A."/>
            <person name="Diard M."/>
            <person name="Dossat C."/>
            <person name="Karoui M.E."/>
            <person name="Frapy E."/>
            <person name="Garry L."/>
            <person name="Ghigo J.M."/>
            <person name="Gilles A.M."/>
            <person name="Johnson J."/>
            <person name="Le Bouguenec C."/>
            <person name="Lescat M."/>
            <person name="Mangenot S."/>
            <person name="Martinez-Jehanne V."/>
            <person name="Matic I."/>
            <person name="Nassif X."/>
            <person name="Oztas S."/>
            <person name="Petit M.A."/>
            <person name="Pichon C."/>
            <person name="Rouy Z."/>
            <person name="Ruf C.S."/>
            <person name="Schneider D."/>
            <person name="Tourret J."/>
            <person name="Vacherie B."/>
            <person name="Vallenet D."/>
            <person name="Medigue C."/>
            <person name="Rocha E.P.C."/>
            <person name="Denamur E."/>
        </authorList>
    </citation>
    <scope>NUCLEOTIDE SEQUENCE [LARGE SCALE GENOMIC DNA]</scope>
    <source>
        <strain>ATCC 35469 / DSM 13698 / BCRC 15582 / CCUG 18766 / IAM 14443 / JCM 21226 / LMG 7866 / NBRC 102419 / NCTC 12128 / CDC 0568-73</strain>
    </source>
</reference>
<sequence>MAKNYYDITLALAGICQSARLVQQLAHQGHCDADALHVSLNSIIDMNPSSTLAVFGGSEANLRVGLETLLGVLNASSRQGLNAELTRYTLSLMVLERKLSSAKGALDTLGNRINGLQRQLEHFDLQSETLMSAMAAIYVDVISPLGPRIQVTGSPAVLQSPQVQAKVRATLLAGIRAAVLWHQVGGGRLQLMFSRNRLTTQAKQILAHLTPEL</sequence>
<feature type="chain" id="PRO_1000132291" description="High frequency lysogenization protein HflD">
    <location>
        <begin position="1"/>
        <end position="213"/>
    </location>
</feature>
<feature type="coiled-coil region" evidence="1">
    <location>
        <begin position="79"/>
        <end position="126"/>
    </location>
</feature>
<organism>
    <name type="scientific">Escherichia fergusonii (strain ATCC 35469 / DSM 13698 / CCUG 18766 / IAM 14443 / JCM 21226 / LMG 7866 / NBRC 102419 / NCTC 12128 / CDC 0568-73)</name>
    <dbReference type="NCBI Taxonomy" id="585054"/>
    <lineage>
        <taxon>Bacteria</taxon>
        <taxon>Pseudomonadati</taxon>
        <taxon>Pseudomonadota</taxon>
        <taxon>Gammaproteobacteria</taxon>
        <taxon>Enterobacterales</taxon>
        <taxon>Enterobacteriaceae</taxon>
        <taxon>Escherichia</taxon>
    </lineage>
</organism>
<proteinExistence type="inferred from homology"/>